<organism>
    <name type="scientific">Saccharomyces cerevisiae (strain ATCC 204508 / S288c)</name>
    <name type="common">Baker's yeast</name>
    <dbReference type="NCBI Taxonomy" id="559292"/>
    <lineage>
        <taxon>Eukaryota</taxon>
        <taxon>Fungi</taxon>
        <taxon>Dikarya</taxon>
        <taxon>Ascomycota</taxon>
        <taxon>Saccharomycotina</taxon>
        <taxon>Saccharomycetes</taxon>
        <taxon>Saccharomycetales</taxon>
        <taxon>Saccharomycetaceae</taxon>
        <taxon>Saccharomyces</taxon>
    </lineage>
</organism>
<sequence length="473" mass="54928">MLRCAVKKFAYFATFLTIVANIYIYTYPSFHPEQCSWNCSNKNAPLQKDLTFVDKVKNYFSDVREQWHGSHASAGNDEDIHILAFGDPQIKGIWPKTPYVSRLDTYGNDYYLGHIYDMMQQRLKPQVVTVMGDLFSSQWIGDSEFHNRTKRYISRIFKRDPTSIENIKQQNLDEKGQYKANWPEWGDRFNEILDNVKENEADNQELSFGFGYENIHSWNPDLEDFLIINITGNHDVGYSGDATYQHMTRFHDLFGKDNYWIEYETNTTHPWRIVVLNDLLLEGPALQPEFVEATWIFLNQLNERKFNGSTVLLTHVPFYKREGLCVDGPDTRYYPDAHAPESYKSGLLRSQNHLSESVSNQVLNMIFENGKPGIILTGHDHEGCETVYNKKSTSTWEATKNIESDVFVKEITVKSMMGEFNGNTGLVTGHFNTDSMTWEWTFSLCPFAIQHVWWFAKVSLLVTIFTWSSLLFV</sequence>
<dbReference type="EMBL" id="Z46861">
    <property type="protein sequence ID" value="CAA86912.1"/>
    <property type="molecule type" value="Genomic_DNA"/>
</dbReference>
<dbReference type="EMBL" id="BK006942">
    <property type="protein sequence ID" value="DAA08509.1"/>
    <property type="molecule type" value="Genomic_DNA"/>
</dbReference>
<dbReference type="PIR" id="S49939">
    <property type="entry name" value="S49939"/>
</dbReference>
<dbReference type="RefSeq" id="NP_012225.1">
    <property type="nucleotide sequence ID" value="NM_001179389.1"/>
</dbReference>
<dbReference type="BioGRID" id="34951">
    <property type="interactions" value="235"/>
</dbReference>
<dbReference type="DIP" id="DIP-4575N"/>
<dbReference type="FunCoup" id="P40533">
    <property type="interactions" value="127"/>
</dbReference>
<dbReference type="IntAct" id="P40533">
    <property type="interactions" value="2"/>
</dbReference>
<dbReference type="MINT" id="P40533"/>
<dbReference type="STRING" id="4932.YIL039W"/>
<dbReference type="GlyCosmos" id="P40533">
    <property type="glycosylation" value="5 sites, No reported glycans"/>
</dbReference>
<dbReference type="GlyGen" id="P40533">
    <property type="glycosylation" value="5 sites"/>
</dbReference>
<dbReference type="PaxDb" id="4932-YIL039W"/>
<dbReference type="PeptideAtlas" id="P40533"/>
<dbReference type="EnsemblFungi" id="YIL039W_mRNA">
    <property type="protein sequence ID" value="YIL039W"/>
    <property type="gene ID" value="YIL039W"/>
</dbReference>
<dbReference type="GeneID" id="854772"/>
<dbReference type="KEGG" id="sce:YIL039W"/>
<dbReference type="AGR" id="SGD:S000001301"/>
<dbReference type="SGD" id="S000001301">
    <property type="gene designation" value="TED1"/>
</dbReference>
<dbReference type="VEuPathDB" id="FungiDB:YIL039W"/>
<dbReference type="eggNOG" id="KOG3662">
    <property type="taxonomic scope" value="Eukaryota"/>
</dbReference>
<dbReference type="GeneTree" id="ENSGT00390000013236"/>
<dbReference type="HOGENOM" id="CLU_021690_1_0_1"/>
<dbReference type="InParanoid" id="P40533"/>
<dbReference type="OMA" id="GLKEQNH"/>
<dbReference type="OrthoDB" id="9984693at2759"/>
<dbReference type="BioCyc" id="YEAST:G3O-31311-MONOMER"/>
<dbReference type="BioGRID-ORCS" id="854772">
    <property type="hits" value="3 hits in 10 CRISPR screens"/>
</dbReference>
<dbReference type="PRO" id="PR:P40533"/>
<dbReference type="Proteomes" id="UP000002311">
    <property type="component" value="Chromosome IX"/>
</dbReference>
<dbReference type="RNAct" id="P40533">
    <property type="molecule type" value="protein"/>
</dbReference>
<dbReference type="GO" id="GO:0005783">
    <property type="term" value="C:endoplasmic reticulum"/>
    <property type="evidence" value="ECO:0007005"/>
    <property type="project" value="SGD"/>
</dbReference>
<dbReference type="GO" id="GO:0005789">
    <property type="term" value="C:endoplasmic reticulum membrane"/>
    <property type="evidence" value="ECO:0007669"/>
    <property type="project" value="UniProtKB-SubCell"/>
</dbReference>
<dbReference type="GO" id="GO:0016787">
    <property type="term" value="F:hydrolase activity"/>
    <property type="evidence" value="ECO:0007669"/>
    <property type="project" value="InterPro"/>
</dbReference>
<dbReference type="GO" id="GO:0006888">
    <property type="term" value="P:endoplasmic reticulum to Golgi vesicle-mediated transport"/>
    <property type="evidence" value="ECO:0000315"/>
    <property type="project" value="SGD"/>
</dbReference>
<dbReference type="GO" id="GO:0006506">
    <property type="term" value="P:GPI anchor biosynthetic process"/>
    <property type="evidence" value="ECO:0000318"/>
    <property type="project" value="GO_Central"/>
</dbReference>
<dbReference type="CDD" id="cd08164">
    <property type="entry name" value="MPP_Ted1"/>
    <property type="match status" value="1"/>
</dbReference>
<dbReference type="InterPro" id="IPR004843">
    <property type="entry name" value="Calcineurin-like_PHP_ApaH"/>
</dbReference>
<dbReference type="InterPro" id="IPR029052">
    <property type="entry name" value="Metallo-depent_PP-like"/>
</dbReference>
<dbReference type="InterPro" id="IPR033308">
    <property type="entry name" value="PGAP5/Cdc1/Ted1"/>
</dbReference>
<dbReference type="InterPro" id="IPR033307">
    <property type="entry name" value="Ted1_MPase_dom"/>
</dbReference>
<dbReference type="PANTHER" id="PTHR13315">
    <property type="entry name" value="METALLO PHOSPHOESTERASE RELATED"/>
    <property type="match status" value="1"/>
</dbReference>
<dbReference type="PANTHER" id="PTHR13315:SF1">
    <property type="entry name" value="PROTEIN TED1"/>
    <property type="match status" value="1"/>
</dbReference>
<dbReference type="Pfam" id="PF00149">
    <property type="entry name" value="Metallophos"/>
    <property type="match status" value="1"/>
</dbReference>
<dbReference type="SUPFAM" id="SSF56300">
    <property type="entry name" value="Metallo-dependent phosphatases"/>
    <property type="match status" value="1"/>
</dbReference>
<accession>P40533</accession>
<accession>D6VVP3</accession>
<name>TED1_YEAST</name>
<evidence type="ECO:0000255" key="1"/>
<evidence type="ECO:0000269" key="2">
    <source>
    </source>
</evidence>
<evidence type="ECO:0000269" key="3">
    <source>
    </source>
</evidence>
<evidence type="ECO:0000269" key="4">
    <source>
    </source>
</evidence>
<evidence type="ECO:0000305" key="5"/>
<feature type="chain" id="PRO_0000202993" description="Protein TED1">
    <location>
        <begin position="1"/>
        <end position="473"/>
    </location>
</feature>
<feature type="topological domain" description="Cytoplasmic" evidence="1">
    <location>
        <begin position="1"/>
        <end position="8"/>
    </location>
</feature>
<feature type="transmembrane region" description="Helical" evidence="1">
    <location>
        <begin position="9"/>
        <end position="29"/>
    </location>
</feature>
<feature type="topological domain" description="Lumenal" evidence="1">
    <location>
        <begin position="30"/>
        <end position="451"/>
    </location>
</feature>
<feature type="transmembrane region" description="Helical" evidence="1">
    <location>
        <begin position="452"/>
        <end position="472"/>
    </location>
</feature>
<feature type="topological domain" description="Cytoplasmic" evidence="1">
    <location>
        <position position="473"/>
    </location>
</feature>
<feature type="glycosylation site" description="N-linked (GlcNAc...) asparagine" evidence="1">
    <location>
        <position position="38"/>
    </location>
</feature>
<feature type="glycosylation site" description="N-linked (GlcNAc...) asparagine" evidence="1">
    <location>
        <position position="147"/>
    </location>
</feature>
<feature type="glycosylation site" description="N-linked (GlcNAc...) asparagine" evidence="1">
    <location>
        <position position="229"/>
    </location>
</feature>
<feature type="glycosylation site" description="N-linked (GlcNAc...) asparagine" evidence="1">
    <location>
        <position position="266"/>
    </location>
</feature>
<feature type="glycosylation site" description="N-linked (GlcNAc...) asparagine" evidence="1">
    <location>
        <position position="307"/>
    </location>
</feature>
<reference key="1">
    <citation type="journal article" date="1997" name="Nature">
        <title>The nucleotide sequence of Saccharomyces cerevisiae chromosome IX.</title>
        <authorList>
            <person name="Churcher C.M."/>
            <person name="Bowman S."/>
            <person name="Badcock K."/>
            <person name="Bankier A.T."/>
            <person name="Brown D."/>
            <person name="Chillingworth T."/>
            <person name="Connor R."/>
            <person name="Devlin K."/>
            <person name="Gentles S."/>
            <person name="Hamlin N."/>
            <person name="Harris D.E."/>
            <person name="Horsnell T."/>
            <person name="Hunt S."/>
            <person name="Jagels K."/>
            <person name="Jones M."/>
            <person name="Lye G."/>
            <person name="Moule S."/>
            <person name="Odell C."/>
            <person name="Pearson D."/>
            <person name="Rajandream M.A."/>
            <person name="Rice P."/>
            <person name="Rowley N."/>
            <person name="Skelton J."/>
            <person name="Smith V."/>
            <person name="Walsh S.V."/>
            <person name="Whitehead S."/>
            <person name="Barrell B.G."/>
        </authorList>
    </citation>
    <scope>NUCLEOTIDE SEQUENCE [LARGE SCALE GENOMIC DNA]</scope>
    <source>
        <strain>ATCC 204508 / S288c</strain>
    </source>
</reference>
<reference key="2">
    <citation type="journal article" date="2014" name="G3 (Bethesda)">
        <title>The reference genome sequence of Saccharomyces cerevisiae: Then and now.</title>
        <authorList>
            <person name="Engel S.R."/>
            <person name="Dietrich F.S."/>
            <person name="Fisk D.G."/>
            <person name="Binkley G."/>
            <person name="Balakrishnan R."/>
            <person name="Costanzo M.C."/>
            <person name="Dwight S.S."/>
            <person name="Hitz B.C."/>
            <person name="Karra K."/>
            <person name="Nash R.S."/>
            <person name="Weng S."/>
            <person name="Wong E.D."/>
            <person name="Lloyd P."/>
            <person name="Skrzypek M.S."/>
            <person name="Miyasato S.R."/>
            <person name="Simison M."/>
            <person name="Cherry J.M."/>
        </authorList>
    </citation>
    <scope>GENOME REANNOTATION</scope>
    <source>
        <strain>ATCC 204508 / S288c</strain>
    </source>
</reference>
<reference key="3">
    <citation type="journal article" date="2003" name="Nature">
        <title>Global analysis of protein localization in budding yeast.</title>
        <authorList>
            <person name="Huh W.-K."/>
            <person name="Falvo J.V."/>
            <person name="Gerke L.C."/>
            <person name="Carroll A.S."/>
            <person name="Howson R.W."/>
            <person name="Weissman J.S."/>
            <person name="O'Shea E.K."/>
        </authorList>
    </citation>
    <scope>SUBCELLULAR LOCATION [LARGE SCALE ANALYSIS]</scope>
</reference>
<reference key="4">
    <citation type="journal article" date="2003" name="Nature">
        <title>Global analysis of protein expression in yeast.</title>
        <authorList>
            <person name="Ghaemmaghami S."/>
            <person name="Huh W.-K."/>
            <person name="Bower K."/>
            <person name="Howson R.W."/>
            <person name="Belle A."/>
            <person name="Dephoure N."/>
            <person name="O'Shea E.K."/>
            <person name="Weissman J.S."/>
        </authorList>
    </citation>
    <scope>LEVEL OF PROTEIN EXPRESSION [LARGE SCALE ANALYSIS]</scope>
</reference>
<reference key="5">
    <citation type="journal article" date="2007" name="Proc. Natl. Acad. Sci. U.S.A.">
        <title>Identification of yeast proteins necessary for cell-surface function of a potassium channel.</title>
        <authorList>
            <person name="Haass F.A."/>
            <person name="Jonikas M."/>
            <person name="Walter P."/>
            <person name="Weissman J.S."/>
            <person name="Jan Y.-N."/>
            <person name="Jan L.Y."/>
            <person name="Schuldiner M."/>
        </authorList>
    </citation>
    <scope>FUNCTION</scope>
    <scope>SUBCELLULAR LOCATION</scope>
</reference>
<reference key="6">
    <citation type="journal article" date="2009" name="Mol. Syst. Biol.">
        <title>Global analysis of the glycoproteome in Saccharomyces cerevisiae reveals new roles for protein glycosylation in eukaryotes.</title>
        <authorList>
            <person name="Kung L.A."/>
            <person name="Tao S.-C."/>
            <person name="Qian J."/>
            <person name="Smith M.G."/>
            <person name="Snyder M."/>
            <person name="Zhu H."/>
        </authorList>
    </citation>
    <scope>GLYCOSYLATION [LARGE SCALE ANALYSIS]</scope>
</reference>
<keyword id="KW-0256">Endoplasmic reticulum</keyword>
<keyword id="KW-0325">Glycoprotein</keyword>
<keyword id="KW-0472">Membrane</keyword>
<keyword id="KW-1185">Reference proteome</keyword>
<keyword id="KW-0812">Transmembrane</keyword>
<keyword id="KW-1133">Transmembrane helix</keyword>
<gene>
    <name type="primary">TED1</name>
    <name type="ordered locus">YIL039W</name>
</gene>
<protein>
    <recommendedName>
        <fullName>Protein TED1</fullName>
    </recommendedName>
    <alternativeName>
        <fullName>Trafficking of EMP24/ERV25-dependent cargo disrupted protein 1</fullName>
    </alternativeName>
</protein>
<proteinExistence type="evidence at protein level"/>
<comment type="function">
    <text evidence="3">Acts together with EMP24 and ERV25 in cargo exit from the endoplasmic reticulum.</text>
</comment>
<comment type="subcellular location">
    <subcellularLocation>
        <location evidence="5">Endoplasmic reticulum membrane</location>
        <topology evidence="5">Multi-pass membrane protein</topology>
    </subcellularLocation>
</comment>
<comment type="PTM">
    <text evidence="4">N-glycosylated.</text>
</comment>
<comment type="miscellaneous">
    <text evidence="2">Present with 1070 molecules/cell in log phase SD medium.</text>
</comment>